<dbReference type="EMBL" id="CP000235">
    <property type="protein sequence ID" value="ABD43237.1"/>
    <property type="molecule type" value="Genomic_DNA"/>
</dbReference>
<dbReference type="RefSeq" id="WP_011450546.1">
    <property type="nucleotide sequence ID" value="NC_007797.1"/>
</dbReference>
<dbReference type="SMR" id="Q2GKS8"/>
<dbReference type="STRING" id="212042.APH_0420"/>
<dbReference type="PaxDb" id="212042-APH_0420"/>
<dbReference type="EnsemblBacteria" id="ABD43237">
    <property type="protein sequence ID" value="ABD43237"/>
    <property type="gene ID" value="APH_0420"/>
</dbReference>
<dbReference type="GeneID" id="92747405"/>
<dbReference type="KEGG" id="aph:APH_0420"/>
<dbReference type="eggNOG" id="COG0216">
    <property type="taxonomic scope" value="Bacteria"/>
</dbReference>
<dbReference type="HOGENOM" id="CLU_036856_0_1_5"/>
<dbReference type="Proteomes" id="UP000001943">
    <property type="component" value="Chromosome"/>
</dbReference>
<dbReference type="GO" id="GO:0005737">
    <property type="term" value="C:cytoplasm"/>
    <property type="evidence" value="ECO:0007669"/>
    <property type="project" value="UniProtKB-SubCell"/>
</dbReference>
<dbReference type="GO" id="GO:0016149">
    <property type="term" value="F:translation release factor activity, codon specific"/>
    <property type="evidence" value="ECO:0007669"/>
    <property type="project" value="UniProtKB-UniRule"/>
</dbReference>
<dbReference type="FunFam" id="3.30.160.20:FF:000004">
    <property type="entry name" value="Peptide chain release factor 1"/>
    <property type="match status" value="1"/>
</dbReference>
<dbReference type="FunFam" id="3.30.70.1660:FF:000002">
    <property type="entry name" value="Peptide chain release factor 1"/>
    <property type="match status" value="1"/>
</dbReference>
<dbReference type="FunFam" id="3.30.70.1660:FF:000004">
    <property type="entry name" value="Peptide chain release factor 1"/>
    <property type="match status" value="1"/>
</dbReference>
<dbReference type="Gene3D" id="3.30.160.20">
    <property type="match status" value="1"/>
</dbReference>
<dbReference type="Gene3D" id="3.30.70.1660">
    <property type="match status" value="1"/>
</dbReference>
<dbReference type="Gene3D" id="6.10.140.1950">
    <property type="match status" value="1"/>
</dbReference>
<dbReference type="HAMAP" id="MF_00093">
    <property type="entry name" value="Rel_fac_1"/>
    <property type="match status" value="1"/>
</dbReference>
<dbReference type="InterPro" id="IPR005139">
    <property type="entry name" value="PCRF"/>
</dbReference>
<dbReference type="InterPro" id="IPR000352">
    <property type="entry name" value="Pep_chain_release_fac_I"/>
</dbReference>
<dbReference type="InterPro" id="IPR045853">
    <property type="entry name" value="Pep_chain_release_fac_I_sf"/>
</dbReference>
<dbReference type="InterPro" id="IPR050057">
    <property type="entry name" value="Prokaryotic/Mito_RF"/>
</dbReference>
<dbReference type="InterPro" id="IPR004373">
    <property type="entry name" value="RF-1"/>
</dbReference>
<dbReference type="NCBIfam" id="TIGR00019">
    <property type="entry name" value="prfA"/>
    <property type="match status" value="1"/>
</dbReference>
<dbReference type="NCBIfam" id="NF001859">
    <property type="entry name" value="PRK00591.1"/>
    <property type="match status" value="1"/>
</dbReference>
<dbReference type="PANTHER" id="PTHR43804">
    <property type="entry name" value="LD18447P"/>
    <property type="match status" value="1"/>
</dbReference>
<dbReference type="PANTHER" id="PTHR43804:SF7">
    <property type="entry name" value="LD18447P"/>
    <property type="match status" value="1"/>
</dbReference>
<dbReference type="Pfam" id="PF03462">
    <property type="entry name" value="PCRF"/>
    <property type="match status" value="1"/>
</dbReference>
<dbReference type="Pfam" id="PF00472">
    <property type="entry name" value="RF-1"/>
    <property type="match status" value="1"/>
</dbReference>
<dbReference type="SMART" id="SM00937">
    <property type="entry name" value="PCRF"/>
    <property type="match status" value="1"/>
</dbReference>
<dbReference type="SUPFAM" id="SSF75620">
    <property type="entry name" value="Release factor"/>
    <property type="match status" value="1"/>
</dbReference>
<dbReference type="PROSITE" id="PS00745">
    <property type="entry name" value="RF_PROK_I"/>
    <property type="match status" value="1"/>
</dbReference>
<comment type="function">
    <text evidence="1">Peptide chain release factor 1 directs the termination of translation in response to the peptide chain termination codons UAG and UAA.</text>
</comment>
<comment type="subcellular location">
    <subcellularLocation>
        <location evidence="1">Cytoplasm</location>
    </subcellularLocation>
</comment>
<comment type="PTM">
    <text evidence="1">Methylated by PrmC. Methylation increases the termination efficiency of RF1.</text>
</comment>
<comment type="similarity">
    <text evidence="1">Belongs to the prokaryotic/mitochondrial release factor family.</text>
</comment>
<accession>Q2GKS8</accession>
<protein>
    <recommendedName>
        <fullName evidence="1">Peptide chain release factor 1</fullName>
        <shortName evidence="1">RF-1</shortName>
    </recommendedName>
</protein>
<reference key="1">
    <citation type="journal article" date="2006" name="PLoS Genet.">
        <title>Comparative genomics of emerging human ehrlichiosis agents.</title>
        <authorList>
            <person name="Dunning Hotopp J.C."/>
            <person name="Lin M."/>
            <person name="Madupu R."/>
            <person name="Crabtree J."/>
            <person name="Angiuoli S.V."/>
            <person name="Eisen J.A."/>
            <person name="Seshadri R."/>
            <person name="Ren Q."/>
            <person name="Wu M."/>
            <person name="Utterback T.R."/>
            <person name="Smith S."/>
            <person name="Lewis M."/>
            <person name="Khouri H."/>
            <person name="Zhang C."/>
            <person name="Niu H."/>
            <person name="Lin Q."/>
            <person name="Ohashi N."/>
            <person name="Zhi N."/>
            <person name="Nelson W.C."/>
            <person name="Brinkac L.M."/>
            <person name="Dodson R.J."/>
            <person name="Rosovitz M.J."/>
            <person name="Sundaram J.P."/>
            <person name="Daugherty S.C."/>
            <person name="Davidsen T."/>
            <person name="Durkin A.S."/>
            <person name="Gwinn M.L."/>
            <person name="Haft D.H."/>
            <person name="Selengut J.D."/>
            <person name="Sullivan S.A."/>
            <person name="Zafar N."/>
            <person name="Zhou L."/>
            <person name="Benahmed F."/>
            <person name="Forberger H."/>
            <person name="Halpin R."/>
            <person name="Mulligan S."/>
            <person name="Robinson J."/>
            <person name="White O."/>
            <person name="Rikihisa Y."/>
            <person name="Tettelin H."/>
        </authorList>
    </citation>
    <scope>NUCLEOTIDE SEQUENCE [LARGE SCALE GENOMIC DNA]</scope>
    <source>
        <strain>HZ</strain>
    </source>
</reference>
<gene>
    <name evidence="1" type="primary">prfA</name>
    <name type="ordered locus">APH_0420</name>
</gene>
<organism>
    <name type="scientific">Anaplasma phagocytophilum (strain HZ)</name>
    <dbReference type="NCBI Taxonomy" id="212042"/>
    <lineage>
        <taxon>Bacteria</taxon>
        <taxon>Pseudomonadati</taxon>
        <taxon>Pseudomonadota</taxon>
        <taxon>Alphaproteobacteria</taxon>
        <taxon>Rickettsiales</taxon>
        <taxon>Anaplasmataceae</taxon>
        <taxon>Anaplasma</taxon>
        <taxon>phagocytophilum group</taxon>
    </lineage>
</organism>
<feature type="chain" id="PRO_0000263232" description="Peptide chain release factor 1">
    <location>
        <begin position="1"/>
        <end position="359"/>
    </location>
</feature>
<feature type="modified residue" description="N5-methylglutamine" evidence="1">
    <location>
        <position position="235"/>
    </location>
</feature>
<keyword id="KW-0963">Cytoplasm</keyword>
<keyword id="KW-0488">Methylation</keyword>
<keyword id="KW-0648">Protein biosynthesis</keyword>
<proteinExistence type="inferred from homology"/>
<sequence>MSFESTFEGLCEKFRILKQQLSAPETLGTQAFVVASREYSDLLPIMSLIEKYKSTQKEIAELEELVNSASTDPELRSLAKDESHIKQKLLPKLRHELQLSLLPKDRDDSRNAILEIRAGTGGEEAALFVGNLYRMYLKYAERKNWKVETINISTTGIGGYKEASFSIGGKDVFARLKFESGVHRVQRVPETESSGRLHTSAATVAVLPEVEEVDLKIDEKDLRIDVYRSSGPGGQSVNTTDSAVRITHIPTGIVVIQQDEKSQHKNKSKALKVLRARLYNLEKQKREEEISKMRKSQIGSGDRSERIRTYNFLQSRITDHRINLTSYRLDYVMKEGDLDEFIDALVADDQANKLKQITH</sequence>
<name>RF1_ANAPZ</name>
<evidence type="ECO:0000255" key="1">
    <source>
        <dbReference type="HAMAP-Rule" id="MF_00093"/>
    </source>
</evidence>